<feature type="transit peptide" description="Mitochondrion" evidence="2">
    <location>
        <begin position="1"/>
        <end position="41"/>
    </location>
</feature>
<feature type="chain" id="PRO_0000338569" description="Mitochondrial intermediate peptidase">
    <location>
        <begin position="42"/>
        <end position="801"/>
    </location>
</feature>
<feature type="region of interest" description="Disordered" evidence="4">
    <location>
        <begin position="31"/>
        <end position="54"/>
    </location>
</feature>
<feature type="active site" evidence="3">
    <location>
        <position position="566"/>
    </location>
</feature>
<feature type="binding site" evidence="3">
    <location>
        <position position="565"/>
    </location>
    <ligand>
        <name>Zn(2+)</name>
        <dbReference type="ChEBI" id="CHEBI:29105"/>
        <note>catalytic</note>
    </ligand>
</feature>
<feature type="binding site" evidence="3">
    <location>
        <position position="569"/>
    </location>
    <ligand>
        <name>Zn(2+)</name>
        <dbReference type="ChEBI" id="CHEBI:29105"/>
        <note>catalytic</note>
    </ligand>
</feature>
<feature type="binding site" evidence="3">
    <location>
        <position position="572"/>
    </location>
    <ligand>
        <name>Zn(2+)</name>
        <dbReference type="ChEBI" id="CHEBI:29105"/>
        <note>catalytic</note>
    </ligand>
</feature>
<sequence length="801" mass="89815">MKPQLLTPLRRRPWTCRQCLQRLQRLQQQTRRSFETAASPAPGHTQVDYIPADASQSKKVDDETIRRVFDSQHFWREFSQRRSTQSKPTGLVQNQYLTSPDGFRTFANVSLQKCQAIVSKVLAASTLEEYRTMARDLDRLSDLLCRVIDLSDFIRVIHPDPRVQEAATQAYALMFEYMNVLNTTTGLNDQLKKAVANPEVASHWTEEEKIVAQILIKDFSNSAILMPPQERQRFVNLSNDISQLGSSFVNSPEPAKSQVVVNANSLRGLDPMLVQQIKRWNRTASVPTTGMIPRLALRSVHDESVRREVYLASRTSSARQLHRLEELLLKRAELAKLSGYSSFGHMTLSDKMAKSPEAVSNFLTSLVDSNRTLVREELLQLRNMKGSPLQPWDHAYYVHKRVMQYSQSRRSRELSAVPEFFSLGTVMQGLSRLFDRLYGVRLVPQEAAPGETWNPDVRRLDVVDEADRHIAVIYCDLFSRPNKHPNPAHFTLRCSREISATEVAECASLDQSSHPNDGMATAVDPTTKTLRQLPTIALVCDFAEPAAHGGRPSLLSEHSVRTLFHEMGHALHSILGQTRLQSISGTRCATDFAELPSVLMEHFATAPSVLSLYARHWETDEPLSERMIQSMERDRTAHGSIYGAVENEAQILMALVDQEYHSRPADGGRIDSTALYHEVAQRHSSLPDPAETAPPTSWQGFFGHLYGYGATYYSYIFDRAIANKLWADVFGAGRAAVDRAAGERYKTEVLRWGGGRNGWQCVAGVLGPSNASNADGRLVEGGDEAMREVGRWGLGRDGVSG</sequence>
<organism>
    <name type="scientific">Aspergillus clavatus (strain ATCC 1007 / CBS 513.65 / DSM 816 / NCTC 3887 / NRRL 1 / QM 1276 / 107)</name>
    <dbReference type="NCBI Taxonomy" id="344612"/>
    <lineage>
        <taxon>Eukaryota</taxon>
        <taxon>Fungi</taxon>
        <taxon>Dikarya</taxon>
        <taxon>Ascomycota</taxon>
        <taxon>Pezizomycotina</taxon>
        <taxon>Eurotiomycetes</taxon>
        <taxon>Eurotiomycetidae</taxon>
        <taxon>Eurotiales</taxon>
        <taxon>Aspergillaceae</taxon>
        <taxon>Aspergillus</taxon>
        <taxon>Aspergillus subgen. Fumigati</taxon>
    </lineage>
</organism>
<reference key="1">
    <citation type="journal article" date="2008" name="PLoS Genet.">
        <title>Genomic islands in the pathogenic filamentous fungus Aspergillus fumigatus.</title>
        <authorList>
            <person name="Fedorova N.D."/>
            <person name="Khaldi N."/>
            <person name="Joardar V.S."/>
            <person name="Maiti R."/>
            <person name="Amedeo P."/>
            <person name="Anderson M.J."/>
            <person name="Crabtree J."/>
            <person name="Silva J.C."/>
            <person name="Badger J.H."/>
            <person name="Albarraq A."/>
            <person name="Angiuoli S."/>
            <person name="Bussey H."/>
            <person name="Bowyer P."/>
            <person name="Cotty P.J."/>
            <person name="Dyer P.S."/>
            <person name="Egan A."/>
            <person name="Galens K."/>
            <person name="Fraser-Liggett C.M."/>
            <person name="Haas B.J."/>
            <person name="Inman J.M."/>
            <person name="Kent R."/>
            <person name="Lemieux S."/>
            <person name="Malavazi I."/>
            <person name="Orvis J."/>
            <person name="Roemer T."/>
            <person name="Ronning C.M."/>
            <person name="Sundaram J.P."/>
            <person name="Sutton G."/>
            <person name="Turner G."/>
            <person name="Venter J.C."/>
            <person name="White O.R."/>
            <person name="Whitty B.R."/>
            <person name="Youngman P."/>
            <person name="Wolfe K.H."/>
            <person name="Goldman G.H."/>
            <person name="Wortman J.R."/>
            <person name="Jiang B."/>
            <person name="Denning D.W."/>
            <person name="Nierman W.C."/>
        </authorList>
    </citation>
    <scope>NUCLEOTIDE SEQUENCE [LARGE SCALE GENOMIC DNA]</scope>
    <source>
        <strain>ATCC 1007 / CBS 513.65 / DSM 816 / NCTC 3887 / NRRL 1 / QM 1276 / 107</strain>
    </source>
</reference>
<keyword id="KW-0378">Hydrolase</keyword>
<keyword id="KW-0479">Metal-binding</keyword>
<keyword id="KW-0482">Metalloprotease</keyword>
<keyword id="KW-0496">Mitochondrion</keyword>
<keyword id="KW-0645">Protease</keyword>
<keyword id="KW-1185">Reference proteome</keyword>
<keyword id="KW-0809">Transit peptide</keyword>
<keyword id="KW-0862">Zinc</keyword>
<protein>
    <recommendedName>
        <fullName>Mitochondrial intermediate peptidase</fullName>
        <shortName>MIP</shortName>
        <ecNumber>3.4.24.59</ecNumber>
    </recommendedName>
    <alternativeName>
        <fullName>Octapeptidyl aminopeptidase</fullName>
    </alternativeName>
</protein>
<name>PMIP_ASPCL</name>
<dbReference type="EC" id="3.4.24.59"/>
<dbReference type="EMBL" id="DS027060">
    <property type="protein sequence ID" value="EAW06682.1"/>
    <property type="molecule type" value="Genomic_DNA"/>
</dbReference>
<dbReference type="RefSeq" id="XP_001268108.1">
    <property type="nucleotide sequence ID" value="XM_001268107.1"/>
</dbReference>
<dbReference type="SMR" id="A1CTP5"/>
<dbReference type="STRING" id="344612.A1CTP5"/>
<dbReference type="EnsemblFungi" id="EAW06682">
    <property type="protein sequence ID" value="EAW06682"/>
    <property type="gene ID" value="ACLA_083770"/>
</dbReference>
<dbReference type="GeneID" id="4700295"/>
<dbReference type="KEGG" id="act:ACLA_083770"/>
<dbReference type="VEuPathDB" id="FungiDB:ACLA_083770"/>
<dbReference type="eggNOG" id="KOG2090">
    <property type="taxonomic scope" value="Eukaryota"/>
</dbReference>
<dbReference type="HOGENOM" id="CLU_001805_0_0_1"/>
<dbReference type="OMA" id="ALMFEYM"/>
<dbReference type="OrthoDB" id="17530at2759"/>
<dbReference type="Proteomes" id="UP000006701">
    <property type="component" value="Unassembled WGS sequence"/>
</dbReference>
<dbReference type="GO" id="GO:0005759">
    <property type="term" value="C:mitochondrial matrix"/>
    <property type="evidence" value="ECO:0007669"/>
    <property type="project" value="UniProtKB-SubCell"/>
</dbReference>
<dbReference type="GO" id="GO:0046872">
    <property type="term" value="F:metal ion binding"/>
    <property type="evidence" value="ECO:0007669"/>
    <property type="project" value="UniProtKB-KW"/>
</dbReference>
<dbReference type="GO" id="GO:0004222">
    <property type="term" value="F:metalloendopeptidase activity"/>
    <property type="evidence" value="ECO:0007669"/>
    <property type="project" value="UniProtKB-EC"/>
</dbReference>
<dbReference type="GO" id="GO:0006518">
    <property type="term" value="P:peptide metabolic process"/>
    <property type="evidence" value="ECO:0007669"/>
    <property type="project" value="TreeGrafter"/>
</dbReference>
<dbReference type="GO" id="GO:0006627">
    <property type="term" value="P:protein processing involved in protein targeting to mitochondrion"/>
    <property type="evidence" value="ECO:0007669"/>
    <property type="project" value="TreeGrafter"/>
</dbReference>
<dbReference type="CDD" id="cd06457">
    <property type="entry name" value="M3A_MIP"/>
    <property type="match status" value="1"/>
</dbReference>
<dbReference type="FunFam" id="3.40.390.10:FF:000029">
    <property type="entry name" value="Mitochondrial intermediate peptidase 1"/>
    <property type="match status" value="1"/>
</dbReference>
<dbReference type="Gene3D" id="3.40.390.10">
    <property type="entry name" value="Collagenase (Catalytic Domain)"/>
    <property type="match status" value="1"/>
</dbReference>
<dbReference type="Gene3D" id="1.10.1370.10">
    <property type="entry name" value="Neurolysin, domain 3"/>
    <property type="match status" value="1"/>
</dbReference>
<dbReference type="InterPro" id="IPR033851">
    <property type="entry name" value="M3A_MIP"/>
</dbReference>
<dbReference type="InterPro" id="IPR024079">
    <property type="entry name" value="MetalloPept_cat_dom_sf"/>
</dbReference>
<dbReference type="InterPro" id="IPR024077">
    <property type="entry name" value="Neurolysin/TOP_dom2"/>
</dbReference>
<dbReference type="InterPro" id="IPR045090">
    <property type="entry name" value="Pept_M3A_M3B"/>
</dbReference>
<dbReference type="InterPro" id="IPR001567">
    <property type="entry name" value="Pept_M3A_M3B_dom"/>
</dbReference>
<dbReference type="PANTHER" id="PTHR11804:SF79">
    <property type="entry name" value="MITOCHONDRIAL INTERMEDIATE PEPTIDASE"/>
    <property type="match status" value="1"/>
</dbReference>
<dbReference type="PANTHER" id="PTHR11804">
    <property type="entry name" value="PROTEASE M3 THIMET OLIGOPEPTIDASE-RELATED"/>
    <property type="match status" value="1"/>
</dbReference>
<dbReference type="Pfam" id="PF01432">
    <property type="entry name" value="Peptidase_M3"/>
    <property type="match status" value="1"/>
</dbReference>
<dbReference type="SUPFAM" id="SSF55486">
    <property type="entry name" value="Metalloproteases ('zincins'), catalytic domain"/>
    <property type="match status" value="1"/>
</dbReference>
<dbReference type="PROSITE" id="PS00142">
    <property type="entry name" value="ZINC_PROTEASE"/>
    <property type="match status" value="1"/>
</dbReference>
<proteinExistence type="inferred from homology"/>
<comment type="function">
    <text evidence="1">Cleaves proteins, imported into the mitochondrion, to their mature size. While most mitochondrial precursor proteins are processed to the mature form in one step by mitochondrial processing peptidase (MPP), the sequential cleavage by MIP of an octapeptide after initial processing by MPP is a required step for a subgroup of nuclear-encoded precursor proteins destined for the matrix or the inner membrane (By similarity).</text>
</comment>
<comment type="catalytic activity">
    <reaction>
        <text>Release of an N-terminal octapeptide as second stage of processing of some proteins imported into the mitochondrion.</text>
        <dbReference type="EC" id="3.4.24.59"/>
    </reaction>
</comment>
<comment type="cofactor">
    <cofactor evidence="1">
        <name>Zn(2+)</name>
        <dbReference type="ChEBI" id="CHEBI:29105"/>
    </cofactor>
    <text evidence="1">Binds 1 zinc ion.</text>
</comment>
<comment type="subcellular location">
    <subcellularLocation>
        <location evidence="1">Mitochondrion matrix</location>
    </subcellularLocation>
</comment>
<comment type="similarity">
    <text evidence="5">Belongs to the peptidase M3 family.</text>
</comment>
<gene>
    <name type="primary">oct1</name>
    <name type="ORF">ACLA_083770</name>
</gene>
<accession>A1CTP5</accession>
<evidence type="ECO:0000250" key="1"/>
<evidence type="ECO:0000255" key="2"/>
<evidence type="ECO:0000255" key="3">
    <source>
        <dbReference type="PROSITE-ProRule" id="PRU10095"/>
    </source>
</evidence>
<evidence type="ECO:0000256" key="4">
    <source>
        <dbReference type="SAM" id="MobiDB-lite"/>
    </source>
</evidence>
<evidence type="ECO:0000305" key="5"/>